<name>ISCS_PSEPG</name>
<feature type="chain" id="PRO_1000079207" description="Cysteine desulfurase IscS">
    <location>
        <begin position="1"/>
        <end position="404"/>
    </location>
</feature>
<feature type="active site" description="Cysteine persulfide intermediate" evidence="1">
    <location>
        <position position="328"/>
    </location>
</feature>
<feature type="binding site" evidence="1">
    <location>
        <begin position="75"/>
        <end position="76"/>
    </location>
    <ligand>
        <name>pyridoxal 5'-phosphate</name>
        <dbReference type="ChEBI" id="CHEBI:597326"/>
    </ligand>
</feature>
<feature type="binding site" evidence="1">
    <location>
        <position position="155"/>
    </location>
    <ligand>
        <name>pyridoxal 5'-phosphate</name>
        <dbReference type="ChEBI" id="CHEBI:597326"/>
    </ligand>
</feature>
<feature type="binding site" evidence="1">
    <location>
        <position position="183"/>
    </location>
    <ligand>
        <name>pyridoxal 5'-phosphate</name>
        <dbReference type="ChEBI" id="CHEBI:597326"/>
    </ligand>
</feature>
<feature type="binding site" evidence="1">
    <location>
        <begin position="203"/>
        <end position="205"/>
    </location>
    <ligand>
        <name>pyridoxal 5'-phosphate</name>
        <dbReference type="ChEBI" id="CHEBI:597326"/>
    </ligand>
</feature>
<feature type="binding site" evidence="1">
    <location>
        <position position="243"/>
    </location>
    <ligand>
        <name>pyridoxal 5'-phosphate</name>
        <dbReference type="ChEBI" id="CHEBI:597326"/>
    </ligand>
</feature>
<feature type="binding site" description="via persulfide group" evidence="1">
    <location>
        <position position="328"/>
    </location>
    <ligand>
        <name>[2Fe-2S] cluster</name>
        <dbReference type="ChEBI" id="CHEBI:190135"/>
        <note>ligand shared with IscU</note>
    </ligand>
</feature>
<feature type="modified residue" description="N6-(pyridoxal phosphate)lysine" evidence="1">
    <location>
        <position position="206"/>
    </location>
</feature>
<reference key="1">
    <citation type="submission" date="2008-01" db="EMBL/GenBank/DDBJ databases">
        <title>Complete sequence of Pseudomonas putida GB-1.</title>
        <authorList>
            <consortium name="US DOE Joint Genome Institute"/>
            <person name="Copeland A."/>
            <person name="Lucas S."/>
            <person name="Lapidus A."/>
            <person name="Barry K."/>
            <person name="Glavina del Rio T."/>
            <person name="Dalin E."/>
            <person name="Tice H."/>
            <person name="Pitluck S."/>
            <person name="Bruce D."/>
            <person name="Goodwin L."/>
            <person name="Chertkov O."/>
            <person name="Brettin T."/>
            <person name="Detter J.C."/>
            <person name="Han C."/>
            <person name="Kuske C.R."/>
            <person name="Schmutz J."/>
            <person name="Larimer F."/>
            <person name="Land M."/>
            <person name="Hauser L."/>
            <person name="Kyrpides N."/>
            <person name="Kim E."/>
            <person name="McCarthy J.K."/>
            <person name="Richardson P."/>
        </authorList>
    </citation>
    <scope>NUCLEOTIDE SEQUENCE [LARGE SCALE GENOMIC DNA]</scope>
    <source>
        <strain>GB-1</strain>
    </source>
</reference>
<protein>
    <recommendedName>
        <fullName evidence="1">Cysteine desulfurase IscS</fullName>
        <ecNumber evidence="1">2.8.1.7</ecNumber>
    </recommendedName>
</protein>
<dbReference type="EC" id="2.8.1.7" evidence="1"/>
<dbReference type="EMBL" id="CP000926">
    <property type="protein sequence ID" value="ABY96795.1"/>
    <property type="molecule type" value="Genomic_DNA"/>
</dbReference>
<dbReference type="RefSeq" id="WP_012270592.1">
    <property type="nucleotide sequence ID" value="NC_010322.1"/>
</dbReference>
<dbReference type="SMR" id="B0KPH6"/>
<dbReference type="KEGG" id="ppg:PputGB1_0885"/>
<dbReference type="eggNOG" id="COG1104">
    <property type="taxonomic scope" value="Bacteria"/>
</dbReference>
<dbReference type="HOGENOM" id="CLU_003433_0_2_6"/>
<dbReference type="UniPathway" id="UPA00266"/>
<dbReference type="Proteomes" id="UP000002157">
    <property type="component" value="Chromosome"/>
</dbReference>
<dbReference type="GO" id="GO:1990221">
    <property type="term" value="C:L-cysteine desulfurase complex"/>
    <property type="evidence" value="ECO:0007669"/>
    <property type="project" value="UniProtKB-ARBA"/>
</dbReference>
<dbReference type="GO" id="GO:0051537">
    <property type="term" value="F:2 iron, 2 sulfur cluster binding"/>
    <property type="evidence" value="ECO:0007669"/>
    <property type="project" value="UniProtKB-UniRule"/>
</dbReference>
<dbReference type="GO" id="GO:0031071">
    <property type="term" value="F:cysteine desulfurase activity"/>
    <property type="evidence" value="ECO:0007669"/>
    <property type="project" value="UniProtKB-UniRule"/>
</dbReference>
<dbReference type="GO" id="GO:0046872">
    <property type="term" value="F:metal ion binding"/>
    <property type="evidence" value="ECO:0007669"/>
    <property type="project" value="UniProtKB-KW"/>
</dbReference>
<dbReference type="GO" id="GO:0030170">
    <property type="term" value="F:pyridoxal phosphate binding"/>
    <property type="evidence" value="ECO:0007669"/>
    <property type="project" value="UniProtKB-UniRule"/>
</dbReference>
<dbReference type="GO" id="GO:0044571">
    <property type="term" value="P:[2Fe-2S] cluster assembly"/>
    <property type="evidence" value="ECO:0007669"/>
    <property type="project" value="UniProtKB-UniRule"/>
</dbReference>
<dbReference type="FunFam" id="3.40.640.10:FF:000003">
    <property type="entry name" value="Cysteine desulfurase IscS"/>
    <property type="match status" value="1"/>
</dbReference>
<dbReference type="FunFam" id="3.90.1150.10:FF:000002">
    <property type="entry name" value="Cysteine desulfurase IscS"/>
    <property type="match status" value="1"/>
</dbReference>
<dbReference type="Gene3D" id="3.90.1150.10">
    <property type="entry name" value="Aspartate Aminotransferase, domain 1"/>
    <property type="match status" value="1"/>
</dbReference>
<dbReference type="Gene3D" id="3.40.640.10">
    <property type="entry name" value="Type I PLP-dependent aspartate aminotransferase-like (Major domain)"/>
    <property type="match status" value="1"/>
</dbReference>
<dbReference type="HAMAP" id="MF_00331">
    <property type="entry name" value="Cys_desulf_IscS"/>
    <property type="match status" value="1"/>
</dbReference>
<dbReference type="InterPro" id="IPR000192">
    <property type="entry name" value="Aminotrans_V_dom"/>
</dbReference>
<dbReference type="InterPro" id="IPR020578">
    <property type="entry name" value="Aminotrans_V_PyrdxlP_BS"/>
</dbReference>
<dbReference type="InterPro" id="IPR010240">
    <property type="entry name" value="Cys_deSase_IscS"/>
</dbReference>
<dbReference type="InterPro" id="IPR016454">
    <property type="entry name" value="Cysteine_dSase"/>
</dbReference>
<dbReference type="InterPro" id="IPR015424">
    <property type="entry name" value="PyrdxlP-dep_Trfase"/>
</dbReference>
<dbReference type="InterPro" id="IPR015421">
    <property type="entry name" value="PyrdxlP-dep_Trfase_major"/>
</dbReference>
<dbReference type="InterPro" id="IPR015422">
    <property type="entry name" value="PyrdxlP-dep_Trfase_small"/>
</dbReference>
<dbReference type="NCBIfam" id="TIGR02006">
    <property type="entry name" value="IscS"/>
    <property type="match status" value="1"/>
</dbReference>
<dbReference type="NCBIfam" id="NF010611">
    <property type="entry name" value="PRK14012.1"/>
    <property type="match status" value="1"/>
</dbReference>
<dbReference type="PANTHER" id="PTHR11601:SF34">
    <property type="entry name" value="CYSTEINE DESULFURASE"/>
    <property type="match status" value="1"/>
</dbReference>
<dbReference type="PANTHER" id="PTHR11601">
    <property type="entry name" value="CYSTEINE DESULFURYLASE FAMILY MEMBER"/>
    <property type="match status" value="1"/>
</dbReference>
<dbReference type="Pfam" id="PF00266">
    <property type="entry name" value="Aminotran_5"/>
    <property type="match status" value="1"/>
</dbReference>
<dbReference type="PIRSF" id="PIRSF005572">
    <property type="entry name" value="NifS"/>
    <property type="match status" value="1"/>
</dbReference>
<dbReference type="SUPFAM" id="SSF53383">
    <property type="entry name" value="PLP-dependent transferases"/>
    <property type="match status" value="1"/>
</dbReference>
<dbReference type="PROSITE" id="PS00595">
    <property type="entry name" value="AA_TRANSFER_CLASS_5"/>
    <property type="match status" value="1"/>
</dbReference>
<comment type="function">
    <text evidence="1">Master enzyme that delivers sulfur to a number of partners involved in Fe-S cluster assembly, tRNA modification or cofactor biosynthesis. Catalyzes the removal of elemental sulfur atoms from cysteine to produce alanine. Functions as a sulfur delivery protein for Fe-S cluster synthesis onto IscU, an Fe-S scaffold assembly protein, as well as other S acceptor proteins.</text>
</comment>
<comment type="catalytic activity">
    <reaction evidence="1">
        <text>(sulfur carrier)-H + L-cysteine = (sulfur carrier)-SH + L-alanine</text>
        <dbReference type="Rhea" id="RHEA:43892"/>
        <dbReference type="Rhea" id="RHEA-COMP:14737"/>
        <dbReference type="Rhea" id="RHEA-COMP:14739"/>
        <dbReference type="ChEBI" id="CHEBI:29917"/>
        <dbReference type="ChEBI" id="CHEBI:35235"/>
        <dbReference type="ChEBI" id="CHEBI:57972"/>
        <dbReference type="ChEBI" id="CHEBI:64428"/>
        <dbReference type="EC" id="2.8.1.7"/>
    </reaction>
</comment>
<comment type="cofactor">
    <cofactor evidence="1">
        <name>pyridoxal 5'-phosphate</name>
        <dbReference type="ChEBI" id="CHEBI:597326"/>
    </cofactor>
</comment>
<comment type="pathway">
    <text evidence="1">Cofactor biosynthesis; iron-sulfur cluster biosynthesis.</text>
</comment>
<comment type="subunit">
    <text evidence="1">Homodimer. Forms a heterotetramer with IscU, interacts with other sulfur acceptors.</text>
</comment>
<comment type="subcellular location">
    <subcellularLocation>
        <location evidence="1">Cytoplasm</location>
    </subcellularLocation>
</comment>
<comment type="similarity">
    <text evidence="1">Belongs to the class-V pyridoxal-phosphate-dependent aminotransferase family. NifS/IscS subfamily.</text>
</comment>
<organism>
    <name type="scientific">Pseudomonas putida (strain GB-1)</name>
    <dbReference type="NCBI Taxonomy" id="76869"/>
    <lineage>
        <taxon>Bacteria</taxon>
        <taxon>Pseudomonadati</taxon>
        <taxon>Pseudomonadota</taxon>
        <taxon>Gammaproteobacteria</taxon>
        <taxon>Pseudomonadales</taxon>
        <taxon>Pseudomonadaceae</taxon>
        <taxon>Pseudomonas</taxon>
    </lineage>
</organism>
<sequence length="404" mass="44469">MKLPIYLDYSATTPVDPRVAQKMADCLLVDGNFGNPASRSHVFGWKAEEAVENGRRQVAELINADPREIVWTSGATESDNLALKGVAHFYQTKGKHIITSKIEHKAVLDTARQLEREGFEVTYLEPGEDGIVTPAMVEAVLRDDTILVSLMHVNNEVGSINDIAAIGELTRSRGVLFHVDAAQSAGKVEIDLQKLKVDLMSFSAHKVYGPKGIGALYVSRKPRVRLEAIIHGGGHERGMRSGTLPTHQIVGMGEAFAIAKQEMVAENARIKALSDRFFKQVSDLEELYVNGSQTARVPHNLNLSFNYVEGESLLMSLKDIAVSSGSACTSASLEPSYVLRALGRNDELAHSSIRFSFGRFTTEEEVDYAAQKVCEAVNKLRELSPLWDMYKDGVDISKIEWAAH</sequence>
<gene>
    <name evidence="1" type="primary">iscS</name>
    <name type="ordered locus">PputGB1_0885</name>
</gene>
<evidence type="ECO:0000255" key="1">
    <source>
        <dbReference type="HAMAP-Rule" id="MF_00331"/>
    </source>
</evidence>
<keyword id="KW-0001">2Fe-2S</keyword>
<keyword id="KW-0963">Cytoplasm</keyword>
<keyword id="KW-0408">Iron</keyword>
<keyword id="KW-0411">Iron-sulfur</keyword>
<keyword id="KW-0479">Metal-binding</keyword>
<keyword id="KW-0663">Pyridoxal phosphate</keyword>
<keyword id="KW-0808">Transferase</keyword>
<proteinExistence type="inferred from homology"/>
<accession>B0KPH6</accession>